<gene>
    <name type="ORF">OsI_021067</name>
    <name type="ORF">OsI_21826</name>
</gene>
<protein>
    <recommendedName>
        <fullName>Proteasome subunit alpha type-4-2</fullName>
    </recommendedName>
    <alternativeName>
        <fullName>20S proteasome alpha subunit C</fullName>
    </alternativeName>
    <alternativeName>
        <fullName>20S proteasome subunit alpha-3</fullName>
    </alternativeName>
</protein>
<feature type="chain" id="PRO_0000361769" description="Proteasome subunit alpha type-4-2">
    <location>
        <begin position="1"/>
        <end position="250"/>
    </location>
</feature>
<reference key="1">
    <citation type="journal article" date="2005" name="PLoS Biol.">
        <title>The genomes of Oryza sativa: a history of duplications.</title>
        <authorList>
            <person name="Yu J."/>
            <person name="Wang J."/>
            <person name="Lin W."/>
            <person name="Li S."/>
            <person name="Li H."/>
            <person name="Zhou J."/>
            <person name="Ni P."/>
            <person name="Dong W."/>
            <person name="Hu S."/>
            <person name="Zeng C."/>
            <person name="Zhang J."/>
            <person name="Zhang Y."/>
            <person name="Li R."/>
            <person name="Xu Z."/>
            <person name="Li S."/>
            <person name="Li X."/>
            <person name="Zheng H."/>
            <person name="Cong L."/>
            <person name="Lin L."/>
            <person name="Yin J."/>
            <person name="Geng J."/>
            <person name="Li G."/>
            <person name="Shi J."/>
            <person name="Liu J."/>
            <person name="Lv H."/>
            <person name="Li J."/>
            <person name="Wang J."/>
            <person name="Deng Y."/>
            <person name="Ran L."/>
            <person name="Shi X."/>
            <person name="Wang X."/>
            <person name="Wu Q."/>
            <person name="Li C."/>
            <person name="Ren X."/>
            <person name="Wang J."/>
            <person name="Wang X."/>
            <person name="Li D."/>
            <person name="Liu D."/>
            <person name="Zhang X."/>
            <person name="Ji Z."/>
            <person name="Zhao W."/>
            <person name="Sun Y."/>
            <person name="Zhang Z."/>
            <person name="Bao J."/>
            <person name="Han Y."/>
            <person name="Dong L."/>
            <person name="Ji J."/>
            <person name="Chen P."/>
            <person name="Wu S."/>
            <person name="Liu J."/>
            <person name="Xiao Y."/>
            <person name="Bu D."/>
            <person name="Tan J."/>
            <person name="Yang L."/>
            <person name="Ye C."/>
            <person name="Zhang J."/>
            <person name="Xu J."/>
            <person name="Zhou Y."/>
            <person name="Yu Y."/>
            <person name="Zhang B."/>
            <person name="Zhuang S."/>
            <person name="Wei H."/>
            <person name="Liu B."/>
            <person name="Lei M."/>
            <person name="Yu H."/>
            <person name="Li Y."/>
            <person name="Xu H."/>
            <person name="Wei S."/>
            <person name="He X."/>
            <person name="Fang L."/>
            <person name="Zhang Z."/>
            <person name="Zhang Y."/>
            <person name="Huang X."/>
            <person name="Su Z."/>
            <person name="Tong W."/>
            <person name="Li J."/>
            <person name="Tong Z."/>
            <person name="Li S."/>
            <person name="Ye J."/>
            <person name="Wang L."/>
            <person name="Fang L."/>
            <person name="Lei T."/>
            <person name="Chen C.-S."/>
            <person name="Chen H.-C."/>
            <person name="Xu Z."/>
            <person name="Li H."/>
            <person name="Huang H."/>
            <person name="Zhang F."/>
            <person name="Xu H."/>
            <person name="Li N."/>
            <person name="Zhao C."/>
            <person name="Li S."/>
            <person name="Dong L."/>
            <person name="Huang Y."/>
            <person name="Li L."/>
            <person name="Xi Y."/>
            <person name="Qi Q."/>
            <person name="Li W."/>
            <person name="Zhang B."/>
            <person name="Hu W."/>
            <person name="Zhang Y."/>
            <person name="Tian X."/>
            <person name="Jiao Y."/>
            <person name="Liang X."/>
            <person name="Jin J."/>
            <person name="Gao L."/>
            <person name="Zheng W."/>
            <person name="Hao B."/>
            <person name="Liu S.-M."/>
            <person name="Wang W."/>
            <person name="Yuan L."/>
            <person name="Cao M."/>
            <person name="McDermott J."/>
            <person name="Samudrala R."/>
            <person name="Wang J."/>
            <person name="Wong G.K.-S."/>
            <person name="Yang H."/>
        </authorList>
    </citation>
    <scope>NUCLEOTIDE SEQUENCE [LARGE SCALE GENOMIC DNA]</scope>
    <source>
        <strain>cv. 93-11</strain>
    </source>
</reference>
<reference key="2">
    <citation type="journal article" date="2009" name="Proteome Sci.">
        <title>Understanding the molecular basis of plant growth promotional effect of Pseudomonas fluorescens on rice through protein profiling.</title>
        <authorList>
            <person name="Kandasamy S."/>
            <person name="Loganathan K."/>
            <person name="Muthuraj R."/>
            <person name="Duraisamy S."/>
            <person name="Seetharaman S."/>
            <person name="Thiruvengadam R."/>
            <person name="Ponnusamy B."/>
            <person name="Ramasamy S."/>
        </authorList>
    </citation>
    <scope>IDENTIFICATION BY MASS SPECTROMETRY</scope>
    <scope>INDUCTION</scope>
    <source>
        <strain>cv. CO43</strain>
        <tissue>Leaf</tissue>
    </source>
</reference>
<name>PSA4B_ORYSI</name>
<sequence>MSRRYDSRTTIFSPEGRLYQVEYAMEAIGNAGSALGVLAADGVVLVGEKKVTSKLLQTSRSAEKMYKIDSHLACAVAGIMSDANILLNTARLHAQRYALSYQEPIPVEQLVQSLCDTKQGYTQFGGLRPFGVSFLFAGWDKHHGFQLYMSDPSGNYSGWKAAAVGANSQAAQSMLKQDYRDGLTREEAVALALKVLSKTMDSTSLTAEKLELAEVFLQPGTGEVQYQVCSPEAMGKLLAKAGLSQPAPEA</sequence>
<evidence type="ECO:0000250" key="1"/>
<evidence type="ECO:0000255" key="2">
    <source>
        <dbReference type="PROSITE-ProRule" id="PRU00808"/>
    </source>
</evidence>
<evidence type="ECO:0000269" key="3">
    <source>
    </source>
</evidence>
<accession>P0C8Y9</accession>
<accession>B8B392</accession>
<comment type="function">
    <text>The proteasome is a multicatalytic proteinase complex which is characterized by its ability to cleave peptides with Arg, Phe, Tyr, Leu, and Glu adjacent to the leaving group at neutral or slightly basic pH. The proteasome has an ATP-dependent proteolytic activity.</text>
</comment>
<comment type="subunit">
    <text evidence="1">The 26S proteasome consists of a 20S proteasome core and two 19S regulatory subunits. The 20S proteasome core is composed of 28 subunits that are arranged in four stacked rings, resulting in a barrel-shaped structure. The two end rings are each formed by seven alpha subunits, and the two central rings are each formed by seven beta subunits. The catalytic chamber with the active sites is on the inside of the barrel (By similarity).</text>
</comment>
<comment type="subcellular location">
    <subcellularLocation>
        <location evidence="1">Cytoplasm</location>
    </subcellularLocation>
    <subcellularLocation>
        <location evidence="1">Nucleus</location>
    </subcellularLocation>
</comment>
<comment type="induction">
    <text evidence="3">Up-regulated in the leaf sheaths of rice plants grown from seeds that were inoculated with the nonpathogenic P.fluorescens strain KH-1.</text>
</comment>
<comment type="mass spectrometry"/>
<comment type="similarity">
    <text evidence="2">Belongs to the peptidase T1A family.</text>
</comment>
<keyword id="KW-0963">Cytoplasm</keyword>
<keyword id="KW-0539">Nucleus</keyword>
<keyword id="KW-0647">Proteasome</keyword>
<keyword id="KW-1185">Reference proteome</keyword>
<proteinExistence type="evidence at protein level"/>
<dbReference type="EMBL" id="CM000131">
    <property type="protein sequence ID" value="EEC80089.1"/>
    <property type="molecule type" value="Genomic_DNA"/>
</dbReference>
<dbReference type="SMR" id="P0C8Y9"/>
<dbReference type="STRING" id="39946.P0C8Y9"/>
<dbReference type="MEROPS" id="T01.973"/>
<dbReference type="EnsemblPlants" id="BGIOSGA022385-TA">
    <property type="protein sequence ID" value="BGIOSGA022385-PA"/>
    <property type="gene ID" value="BGIOSGA022385"/>
</dbReference>
<dbReference type="EnsemblPlants" id="OsGoSa_06g0004870.01">
    <property type="protein sequence ID" value="OsGoSa_06g0004870.01"/>
    <property type="gene ID" value="OsGoSa_06g0004870"/>
</dbReference>
<dbReference type="EnsemblPlants" id="OsIR64_06g0004760.01">
    <property type="protein sequence ID" value="OsIR64_06g0004760.01"/>
    <property type="gene ID" value="OsIR64_06g0004760"/>
</dbReference>
<dbReference type="EnsemblPlants" id="OsKYG_06g0004860.01">
    <property type="protein sequence ID" value="OsKYG_06g0004860.01"/>
    <property type="gene ID" value="OsKYG_06g0004860"/>
</dbReference>
<dbReference type="EnsemblPlants" id="OsLaMu_06g0004770.01">
    <property type="protein sequence ID" value="OsLaMu_06g0004770.01"/>
    <property type="gene ID" value="OsLaMu_06g0004770"/>
</dbReference>
<dbReference type="EnsemblPlants" id="OsLima_06g0005010.01">
    <property type="protein sequence ID" value="OsLima_06g0005010.01"/>
    <property type="gene ID" value="OsLima_06g0005010"/>
</dbReference>
<dbReference type="EnsemblPlants" id="OsLiXu_Ung0027120.01">
    <property type="protein sequence ID" value="OsLiXu_Ung0027120.01"/>
    <property type="gene ID" value="OsLiXu_Ung0027120"/>
</dbReference>
<dbReference type="EnsemblPlants" id="OsMH63_06G004760_01">
    <property type="protein sequence ID" value="OsMH63_06G004760_01"/>
    <property type="gene ID" value="OsMH63_06G004760"/>
</dbReference>
<dbReference type="EnsemblPlants" id="OsPr106_06g0004900.01">
    <property type="protein sequence ID" value="OsPr106_06g0004900.01"/>
    <property type="gene ID" value="OsPr106_06g0004900"/>
</dbReference>
<dbReference type="EnsemblPlants" id="OsZS97_06G004790_01">
    <property type="protein sequence ID" value="OsZS97_06G004790_01"/>
    <property type="gene ID" value="OsZS97_06G004790"/>
</dbReference>
<dbReference type="Gramene" id="BGIOSGA022385-TA">
    <property type="protein sequence ID" value="BGIOSGA022385-PA"/>
    <property type="gene ID" value="BGIOSGA022385"/>
</dbReference>
<dbReference type="Gramene" id="OsGoSa_06g0004870.01">
    <property type="protein sequence ID" value="OsGoSa_06g0004870.01"/>
    <property type="gene ID" value="OsGoSa_06g0004870"/>
</dbReference>
<dbReference type="Gramene" id="OsIR64_06g0004760.01">
    <property type="protein sequence ID" value="OsIR64_06g0004760.01"/>
    <property type="gene ID" value="OsIR64_06g0004760"/>
</dbReference>
<dbReference type="Gramene" id="OsKYG_06g0004860.01">
    <property type="protein sequence ID" value="OsKYG_06g0004860.01"/>
    <property type="gene ID" value="OsKYG_06g0004860"/>
</dbReference>
<dbReference type="Gramene" id="OsLaMu_06g0004770.01">
    <property type="protein sequence ID" value="OsLaMu_06g0004770.01"/>
    <property type="gene ID" value="OsLaMu_06g0004770"/>
</dbReference>
<dbReference type="Gramene" id="OsLima_06g0005010.01">
    <property type="protein sequence ID" value="OsLima_06g0005010.01"/>
    <property type="gene ID" value="OsLima_06g0005010"/>
</dbReference>
<dbReference type="Gramene" id="OsLiXu_Ung0027120.01">
    <property type="protein sequence ID" value="OsLiXu_Ung0027120.01"/>
    <property type="gene ID" value="OsLiXu_Ung0027120"/>
</dbReference>
<dbReference type="Gramene" id="OsMH63_06G004760_01">
    <property type="protein sequence ID" value="OsMH63_06G004760_01"/>
    <property type="gene ID" value="OsMH63_06G004760"/>
</dbReference>
<dbReference type="Gramene" id="OsPr106_06g0004900.01">
    <property type="protein sequence ID" value="OsPr106_06g0004900.01"/>
    <property type="gene ID" value="OsPr106_06g0004900"/>
</dbReference>
<dbReference type="Gramene" id="OsZS97_06G004790_01">
    <property type="protein sequence ID" value="OsZS97_06G004790_01"/>
    <property type="gene ID" value="OsZS97_06G004790"/>
</dbReference>
<dbReference type="HOGENOM" id="CLU_035750_4_3_1"/>
<dbReference type="OMA" id="YVLNDNM"/>
<dbReference type="OrthoDB" id="431557at2759"/>
<dbReference type="Proteomes" id="UP000007015">
    <property type="component" value="Chromosome 6"/>
</dbReference>
<dbReference type="GO" id="GO:0005737">
    <property type="term" value="C:cytoplasm"/>
    <property type="evidence" value="ECO:0007669"/>
    <property type="project" value="UniProtKB-SubCell"/>
</dbReference>
<dbReference type="GO" id="GO:0005634">
    <property type="term" value="C:nucleus"/>
    <property type="evidence" value="ECO:0007669"/>
    <property type="project" value="UniProtKB-SubCell"/>
</dbReference>
<dbReference type="GO" id="GO:0019773">
    <property type="term" value="C:proteasome core complex, alpha-subunit complex"/>
    <property type="evidence" value="ECO:0000250"/>
    <property type="project" value="UniProtKB"/>
</dbReference>
<dbReference type="GO" id="GO:0006511">
    <property type="term" value="P:ubiquitin-dependent protein catabolic process"/>
    <property type="evidence" value="ECO:0007669"/>
    <property type="project" value="InterPro"/>
</dbReference>
<dbReference type="CDD" id="cd03752">
    <property type="entry name" value="proteasome_alpha_type_4"/>
    <property type="match status" value="1"/>
</dbReference>
<dbReference type="FunFam" id="3.60.20.10:FF:000031">
    <property type="entry name" value="Proteasome subunit alpha type"/>
    <property type="match status" value="1"/>
</dbReference>
<dbReference type="Gene3D" id="3.60.20.10">
    <property type="entry name" value="Glutamine Phosphoribosylpyrophosphate, subunit 1, domain 1"/>
    <property type="match status" value="1"/>
</dbReference>
<dbReference type="InterPro" id="IPR029055">
    <property type="entry name" value="Ntn_hydrolases_N"/>
</dbReference>
<dbReference type="InterPro" id="IPR050115">
    <property type="entry name" value="Proteasome_alpha"/>
</dbReference>
<dbReference type="InterPro" id="IPR023332">
    <property type="entry name" value="Proteasome_alpha-type"/>
</dbReference>
<dbReference type="InterPro" id="IPR000426">
    <property type="entry name" value="Proteasome_asu_N"/>
</dbReference>
<dbReference type="InterPro" id="IPR001353">
    <property type="entry name" value="Proteasome_sua/b"/>
</dbReference>
<dbReference type="NCBIfam" id="NF003075">
    <property type="entry name" value="PRK03996.1"/>
    <property type="match status" value="1"/>
</dbReference>
<dbReference type="PANTHER" id="PTHR11599">
    <property type="entry name" value="PROTEASOME SUBUNIT ALPHA/BETA"/>
    <property type="match status" value="1"/>
</dbReference>
<dbReference type="Pfam" id="PF00227">
    <property type="entry name" value="Proteasome"/>
    <property type="match status" value="1"/>
</dbReference>
<dbReference type="Pfam" id="PF10584">
    <property type="entry name" value="Proteasome_A_N"/>
    <property type="match status" value="1"/>
</dbReference>
<dbReference type="SMART" id="SM00948">
    <property type="entry name" value="Proteasome_A_N"/>
    <property type="match status" value="1"/>
</dbReference>
<dbReference type="SUPFAM" id="SSF56235">
    <property type="entry name" value="N-terminal nucleophile aminohydrolases (Ntn hydrolases)"/>
    <property type="match status" value="1"/>
</dbReference>
<dbReference type="PROSITE" id="PS00388">
    <property type="entry name" value="PROTEASOME_ALPHA_1"/>
    <property type="match status" value="1"/>
</dbReference>
<dbReference type="PROSITE" id="PS51475">
    <property type="entry name" value="PROTEASOME_ALPHA_2"/>
    <property type="match status" value="1"/>
</dbReference>
<organism>
    <name type="scientific">Oryza sativa subsp. indica</name>
    <name type="common">Rice</name>
    <dbReference type="NCBI Taxonomy" id="39946"/>
    <lineage>
        <taxon>Eukaryota</taxon>
        <taxon>Viridiplantae</taxon>
        <taxon>Streptophyta</taxon>
        <taxon>Embryophyta</taxon>
        <taxon>Tracheophyta</taxon>
        <taxon>Spermatophyta</taxon>
        <taxon>Magnoliopsida</taxon>
        <taxon>Liliopsida</taxon>
        <taxon>Poales</taxon>
        <taxon>Poaceae</taxon>
        <taxon>BOP clade</taxon>
        <taxon>Oryzoideae</taxon>
        <taxon>Oryzeae</taxon>
        <taxon>Oryzinae</taxon>
        <taxon>Oryza</taxon>
        <taxon>Oryza sativa</taxon>
    </lineage>
</organism>